<gene>
    <name evidence="1" type="primary">gatB</name>
    <name type="ordered locus">Rfer_3926</name>
</gene>
<reference key="1">
    <citation type="submission" date="2006-02" db="EMBL/GenBank/DDBJ databases">
        <title>Complete sequence of chromosome of Rhodoferax ferrireducens DSM 15236.</title>
        <authorList>
            <person name="Copeland A."/>
            <person name="Lucas S."/>
            <person name="Lapidus A."/>
            <person name="Barry K."/>
            <person name="Detter J.C."/>
            <person name="Glavina del Rio T."/>
            <person name="Hammon N."/>
            <person name="Israni S."/>
            <person name="Pitluck S."/>
            <person name="Brettin T."/>
            <person name="Bruce D."/>
            <person name="Han C."/>
            <person name="Tapia R."/>
            <person name="Gilna P."/>
            <person name="Kiss H."/>
            <person name="Schmutz J."/>
            <person name="Larimer F."/>
            <person name="Land M."/>
            <person name="Kyrpides N."/>
            <person name="Ivanova N."/>
            <person name="Richardson P."/>
        </authorList>
    </citation>
    <scope>NUCLEOTIDE SEQUENCE [LARGE SCALE GENOMIC DNA]</scope>
    <source>
        <strain>ATCC BAA-621 / DSM 15236 / T118</strain>
    </source>
</reference>
<comment type="function">
    <text evidence="1">Allows the formation of correctly charged Asn-tRNA(Asn) or Gln-tRNA(Gln) through the transamidation of misacylated Asp-tRNA(Asn) or Glu-tRNA(Gln) in organisms which lack either or both of asparaginyl-tRNA or glutaminyl-tRNA synthetases. The reaction takes place in the presence of glutamine and ATP through an activated phospho-Asp-tRNA(Asn) or phospho-Glu-tRNA(Gln).</text>
</comment>
<comment type="catalytic activity">
    <reaction evidence="1">
        <text>L-glutamyl-tRNA(Gln) + L-glutamine + ATP + H2O = L-glutaminyl-tRNA(Gln) + L-glutamate + ADP + phosphate + H(+)</text>
        <dbReference type="Rhea" id="RHEA:17521"/>
        <dbReference type="Rhea" id="RHEA-COMP:9681"/>
        <dbReference type="Rhea" id="RHEA-COMP:9684"/>
        <dbReference type="ChEBI" id="CHEBI:15377"/>
        <dbReference type="ChEBI" id="CHEBI:15378"/>
        <dbReference type="ChEBI" id="CHEBI:29985"/>
        <dbReference type="ChEBI" id="CHEBI:30616"/>
        <dbReference type="ChEBI" id="CHEBI:43474"/>
        <dbReference type="ChEBI" id="CHEBI:58359"/>
        <dbReference type="ChEBI" id="CHEBI:78520"/>
        <dbReference type="ChEBI" id="CHEBI:78521"/>
        <dbReference type="ChEBI" id="CHEBI:456216"/>
    </reaction>
</comment>
<comment type="catalytic activity">
    <reaction evidence="1">
        <text>L-aspartyl-tRNA(Asn) + L-glutamine + ATP + H2O = L-asparaginyl-tRNA(Asn) + L-glutamate + ADP + phosphate + 2 H(+)</text>
        <dbReference type="Rhea" id="RHEA:14513"/>
        <dbReference type="Rhea" id="RHEA-COMP:9674"/>
        <dbReference type="Rhea" id="RHEA-COMP:9677"/>
        <dbReference type="ChEBI" id="CHEBI:15377"/>
        <dbReference type="ChEBI" id="CHEBI:15378"/>
        <dbReference type="ChEBI" id="CHEBI:29985"/>
        <dbReference type="ChEBI" id="CHEBI:30616"/>
        <dbReference type="ChEBI" id="CHEBI:43474"/>
        <dbReference type="ChEBI" id="CHEBI:58359"/>
        <dbReference type="ChEBI" id="CHEBI:78515"/>
        <dbReference type="ChEBI" id="CHEBI:78516"/>
        <dbReference type="ChEBI" id="CHEBI:456216"/>
    </reaction>
</comment>
<comment type="subunit">
    <text evidence="1">Heterotrimer of A, B and C subunits.</text>
</comment>
<comment type="similarity">
    <text evidence="1">Belongs to the GatB/GatE family. GatB subfamily.</text>
</comment>
<comment type="sequence caution" evidence="2">
    <conflict type="erroneous initiation">
        <sequence resource="EMBL-CDS" id="ABD71625"/>
    </conflict>
</comment>
<name>GATB_ALBFT</name>
<protein>
    <recommendedName>
        <fullName evidence="1">Aspartyl/glutamyl-tRNA(Asn/Gln) amidotransferase subunit B</fullName>
        <shortName evidence="1">Asp/Glu-ADT subunit B</shortName>
        <ecNumber evidence="1">6.3.5.-</ecNumber>
    </recommendedName>
</protein>
<feature type="chain" id="PRO_0000241266" description="Aspartyl/glutamyl-tRNA(Asn/Gln) amidotransferase subunit B">
    <location>
        <begin position="1"/>
        <end position="476"/>
    </location>
</feature>
<proteinExistence type="inferred from homology"/>
<organism>
    <name type="scientific">Albidiferax ferrireducens (strain ATCC BAA-621 / DSM 15236 / T118)</name>
    <name type="common">Rhodoferax ferrireducens</name>
    <dbReference type="NCBI Taxonomy" id="338969"/>
    <lineage>
        <taxon>Bacteria</taxon>
        <taxon>Pseudomonadati</taxon>
        <taxon>Pseudomonadota</taxon>
        <taxon>Betaproteobacteria</taxon>
        <taxon>Burkholderiales</taxon>
        <taxon>Comamonadaceae</taxon>
        <taxon>Rhodoferax</taxon>
    </lineage>
</organism>
<evidence type="ECO:0000255" key="1">
    <source>
        <dbReference type="HAMAP-Rule" id="MF_00121"/>
    </source>
</evidence>
<evidence type="ECO:0000305" key="2"/>
<accession>Q21RH8</accession>
<sequence>MLGYEVVIGFETHAQLSTQSKIFSRAATAFGAEPNTQACAVDLALPGTLPVMNRGAVERAIQFALAIGAQVSPRSIFARKNYFYPDLPKGYQISQFEIPVVVGGEVEFYLDGEKRSVRLVRAHLEEDAGKSLHEDYVGQTGIDLNRAGTPLLEIVTEPDMRSSLEAVAYAKELHKIVTWIGICDGNMQEGSFRCDANVSVRKPGAPLGTRREVKNLNSFKFMQQAIDYEVRWQIEQLEDGHAIEQATVLFDPDSGETRSMRSKEDAADYRYFPDPDLPPLVIADDWVQRVRAEMTELPRVMAQRFVADYGLSDYDATALTQSHAIAAYFQAAAKACGQAKLASNWIMGDVARRLNTDEIDIAQSPVNAAQLGLLITRIVDGTLSNNAAKQVLDALWAGESPDVDAVIESKGLKQMNDSGALEKIVDDVLAANPKNIEQYKAGNSKALNALVGQIMKGSQGKANPQQVNDLLRKKLD</sequence>
<dbReference type="EC" id="6.3.5.-" evidence="1"/>
<dbReference type="EMBL" id="CP000267">
    <property type="protein sequence ID" value="ABD71625.1"/>
    <property type="status" value="ALT_INIT"/>
    <property type="molecule type" value="Genomic_DNA"/>
</dbReference>
<dbReference type="RefSeq" id="WP_011466187.1">
    <property type="nucleotide sequence ID" value="NC_007908.1"/>
</dbReference>
<dbReference type="SMR" id="Q21RH8"/>
<dbReference type="STRING" id="338969.Rfer_3926"/>
<dbReference type="KEGG" id="rfr:Rfer_3926"/>
<dbReference type="eggNOG" id="COG0064">
    <property type="taxonomic scope" value="Bacteria"/>
</dbReference>
<dbReference type="HOGENOM" id="CLU_019240_1_1_4"/>
<dbReference type="OrthoDB" id="9804078at2"/>
<dbReference type="Proteomes" id="UP000008332">
    <property type="component" value="Chromosome"/>
</dbReference>
<dbReference type="GO" id="GO:0050566">
    <property type="term" value="F:asparaginyl-tRNA synthase (glutamine-hydrolyzing) activity"/>
    <property type="evidence" value="ECO:0007669"/>
    <property type="project" value="RHEA"/>
</dbReference>
<dbReference type="GO" id="GO:0005524">
    <property type="term" value="F:ATP binding"/>
    <property type="evidence" value="ECO:0007669"/>
    <property type="project" value="UniProtKB-KW"/>
</dbReference>
<dbReference type="GO" id="GO:0050567">
    <property type="term" value="F:glutaminyl-tRNA synthase (glutamine-hydrolyzing) activity"/>
    <property type="evidence" value="ECO:0007669"/>
    <property type="project" value="UniProtKB-UniRule"/>
</dbReference>
<dbReference type="GO" id="GO:0070681">
    <property type="term" value="P:glutaminyl-tRNAGln biosynthesis via transamidation"/>
    <property type="evidence" value="ECO:0007669"/>
    <property type="project" value="TreeGrafter"/>
</dbReference>
<dbReference type="GO" id="GO:0006412">
    <property type="term" value="P:translation"/>
    <property type="evidence" value="ECO:0007669"/>
    <property type="project" value="UniProtKB-UniRule"/>
</dbReference>
<dbReference type="FunFam" id="1.10.10.410:FF:000001">
    <property type="entry name" value="Aspartyl/glutamyl-tRNA(Asn/Gln) amidotransferase subunit B"/>
    <property type="match status" value="1"/>
</dbReference>
<dbReference type="FunFam" id="1.10.150.380:FF:000001">
    <property type="entry name" value="Aspartyl/glutamyl-tRNA(Asn/Gln) amidotransferase subunit B"/>
    <property type="match status" value="1"/>
</dbReference>
<dbReference type="Gene3D" id="1.10.10.410">
    <property type="match status" value="1"/>
</dbReference>
<dbReference type="Gene3D" id="1.10.150.380">
    <property type="entry name" value="GatB domain, N-terminal subdomain"/>
    <property type="match status" value="1"/>
</dbReference>
<dbReference type="HAMAP" id="MF_00121">
    <property type="entry name" value="GatB"/>
    <property type="match status" value="1"/>
</dbReference>
<dbReference type="InterPro" id="IPR017959">
    <property type="entry name" value="Asn/Gln-tRNA_amidoTrfase_suB/E"/>
</dbReference>
<dbReference type="InterPro" id="IPR006075">
    <property type="entry name" value="Asn/Gln-tRNA_Trfase_suB/E_cat"/>
</dbReference>
<dbReference type="InterPro" id="IPR018027">
    <property type="entry name" value="Asn/Gln_amidotransferase"/>
</dbReference>
<dbReference type="InterPro" id="IPR003789">
    <property type="entry name" value="Asn/Gln_tRNA_amidoTrase-B-like"/>
</dbReference>
<dbReference type="InterPro" id="IPR004413">
    <property type="entry name" value="GatB"/>
</dbReference>
<dbReference type="InterPro" id="IPR042114">
    <property type="entry name" value="GatB_C_1"/>
</dbReference>
<dbReference type="InterPro" id="IPR023168">
    <property type="entry name" value="GatB_Yqey_C_2"/>
</dbReference>
<dbReference type="InterPro" id="IPR017958">
    <property type="entry name" value="Gln-tRNA_amidoTrfase_suB_CS"/>
</dbReference>
<dbReference type="InterPro" id="IPR014746">
    <property type="entry name" value="Gln_synth/guanido_kin_cat_dom"/>
</dbReference>
<dbReference type="NCBIfam" id="TIGR00133">
    <property type="entry name" value="gatB"/>
    <property type="match status" value="1"/>
</dbReference>
<dbReference type="NCBIfam" id="NF004012">
    <property type="entry name" value="PRK05477.1-2"/>
    <property type="match status" value="1"/>
</dbReference>
<dbReference type="NCBIfam" id="NF004014">
    <property type="entry name" value="PRK05477.1-4"/>
    <property type="match status" value="1"/>
</dbReference>
<dbReference type="PANTHER" id="PTHR11659">
    <property type="entry name" value="GLUTAMYL-TRNA GLN AMIDOTRANSFERASE SUBUNIT B MITOCHONDRIAL AND PROKARYOTIC PET112-RELATED"/>
    <property type="match status" value="1"/>
</dbReference>
<dbReference type="PANTHER" id="PTHR11659:SF0">
    <property type="entry name" value="GLUTAMYL-TRNA(GLN) AMIDOTRANSFERASE SUBUNIT B, MITOCHONDRIAL"/>
    <property type="match status" value="1"/>
</dbReference>
<dbReference type="Pfam" id="PF02934">
    <property type="entry name" value="GatB_N"/>
    <property type="match status" value="1"/>
</dbReference>
<dbReference type="Pfam" id="PF02637">
    <property type="entry name" value="GatB_Yqey"/>
    <property type="match status" value="1"/>
</dbReference>
<dbReference type="SMART" id="SM00845">
    <property type="entry name" value="GatB_Yqey"/>
    <property type="match status" value="1"/>
</dbReference>
<dbReference type="SUPFAM" id="SSF89095">
    <property type="entry name" value="GatB/YqeY motif"/>
    <property type="match status" value="1"/>
</dbReference>
<dbReference type="SUPFAM" id="SSF55931">
    <property type="entry name" value="Glutamine synthetase/guanido kinase"/>
    <property type="match status" value="1"/>
</dbReference>
<dbReference type="PROSITE" id="PS01234">
    <property type="entry name" value="GATB"/>
    <property type="match status" value="1"/>
</dbReference>
<keyword id="KW-0067">ATP-binding</keyword>
<keyword id="KW-0436">Ligase</keyword>
<keyword id="KW-0547">Nucleotide-binding</keyword>
<keyword id="KW-0648">Protein biosynthesis</keyword>
<keyword id="KW-1185">Reference proteome</keyword>